<feature type="chain" id="PRO_0000139593" description="Hypoxanthine-guanine phosphoribosyltransferase">
    <location>
        <begin position="1"/>
        <end position="211"/>
    </location>
</feature>
<feature type="region of interest" description="Disordered" evidence="2">
    <location>
        <begin position="1"/>
        <end position="20"/>
    </location>
</feature>
<feature type="active site" description="Proton acceptor" evidence="1">
    <location>
        <position position="129"/>
    </location>
</feature>
<feature type="binding site" evidence="1">
    <location>
        <position position="66"/>
    </location>
    <ligand>
        <name>GMP</name>
        <dbReference type="ChEBI" id="CHEBI:58115"/>
    </ligand>
</feature>
<feature type="binding site" evidence="1">
    <location>
        <begin position="125"/>
        <end position="133"/>
    </location>
    <ligand>
        <name>GMP</name>
        <dbReference type="ChEBI" id="CHEBI:58115"/>
    </ligand>
</feature>
<feature type="binding site" evidence="1">
    <location>
        <position position="157"/>
    </location>
    <ligand>
        <name>GMP</name>
        <dbReference type="ChEBI" id="CHEBI:58115"/>
    </ligand>
</feature>
<feature type="binding site" evidence="1">
    <location>
        <position position="185"/>
    </location>
    <ligand>
        <name>GMP</name>
        <dbReference type="ChEBI" id="CHEBI:58115"/>
    </ligand>
</feature>
<feature type="binding site" evidence="1">
    <location>
        <position position="185"/>
    </location>
    <ligand>
        <name>Mg(2+)</name>
        <dbReference type="ChEBI" id="CHEBI:18420"/>
    </ligand>
</feature>
<dbReference type="EC" id="2.4.2.8"/>
<dbReference type="EMBL" id="L25412">
    <property type="protein sequence ID" value="AAB00074.1"/>
    <property type="molecule type" value="Genomic_DNA"/>
</dbReference>
<dbReference type="RefSeq" id="XP_003860615.1">
    <property type="nucleotide sequence ID" value="XM_003860567.1"/>
</dbReference>
<dbReference type="SMR" id="P43152"/>
<dbReference type="GeneID" id="13386422"/>
<dbReference type="KEGG" id="ldo:LDBPK_210980"/>
<dbReference type="VEuPathDB" id="TriTrypDB:LdBPK_210980.1"/>
<dbReference type="VEuPathDB" id="TriTrypDB:LdCL_210014800"/>
<dbReference type="VEuPathDB" id="TriTrypDB:LDHU3_21.1150"/>
<dbReference type="OMA" id="VIFMEDI"/>
<dbReference type="OrthoDB" id="9449045at2759"/>
<dbReference type="UniPathway" id="UPA00591">
    <property type="reaction ID" value="UER00648"/>
</dbReference>
<dbReference type="GO" id="GO:0005829">
    <property type="term" value="C:cytosol"/>
    <property type="evidence" value="ECO:0007669"/>
    <property type="project" value="TreeGrafter"/>
</dbReference>
<dbReference type="GO" id="GO:0052657">
    <property type="term" value="F:guanine phosphoribosyltransferase activity"/>
    <property type="evidence" value="ECO:0007669"/>
    <property type="project" value="RHEA"/>
</dbReference>
<dbReference type="GO" id="GO:0004422">
    <property type="term" value="F:hypoxanthine phosphoribosyltransferase activity"/>
    <property type="evidence" value="ECO:0007669"/>
    <property type="project" value="InterPro"/>
</dbReference>
<dbReference type="GO" id="GO:0000287">
    <property type="term" value="F:magnesium ion binding"/>
    <property type="evidence" value="ECO:0007669"/>
    <property type="project" value="TreeGrafter"/>
</dbReference>
<dbReference type="GO" id="GO:0000166">
    <property type="term" value="F:nucleotide binding"/>
    <property type="evidence" value="ECO:0007669"/>
    <property type="project" value="UniProtKB-KW"/>
</dbReference>
<dbReference type="GO" id="GO:0032263">
    <property type="term" value="P:GMP salvage"/>
    <property type="evidence" value="ECO:0007669"/>
    <property type="project" value="TreeGrafter"/>
</dbReference>
<dbReference type="GO" id="GO:0006178">
    <property type="term" value="P:guanine salvage"/>
    <property type="evidence" value="ECO:0007669"/>
    <property type="project" value="TreeGrafter"/>
</dbReference>
<dbReference type="GO" id="GO:0046100">
    <property type="term" value="P:hypoxanthine metabolic process"/>
    <property type="evidence" value="ECO:0007669"/>
    <property type="project" value="TreeGrafter"/>
</dbReference>
<dbReference type="GO" id="GO:0032264">
    <property type="term" value="P:IMP salvage"/>
    <property type="evidence" value="ECO:0007669"/>
    <property type="project" value="UniProtKB-UniPathway"/>
</dbReference>
<dbReference type="GO" id="GO:0006166">
    <property type="term" value="P:purine ribonucleoside salvage"/>
    <property type="evidence" value="ECO:0007669"/>
    <property type="project" value="UniProtKB-KW"/>
</dbReference>
<dbReference type="CDD" id="cd06223">
    <property type="entry name" value="PRTases_typeI"/>
    <property type="match status" value="1"/>
</dbReference>
<dbReference type="FunFam" id="3.40.50.2020:FF:000006">
    <property type="entry name" value="Hypoxanthine phosphoribosyltransferase"/>
    <property type="match status" value="1"/>
</dbReference>
<dbReference type="Gene3D" id="3.40.50.2020">
    <property type="match status" value="1"/>
</dbReference>
<dbReference type="InterPro" id="IPR050408">
    <property type="entry name" value="HGPRT"/>
</dbReference>
<dbReference type="InterPro" id="IPR005904">
    <property type="entry name" value="Hxn_phspho_trans"/>
</dbReference>
<dbReference type="InterPro" id="IPR000836">
    <property type="entry name" value="PRibTrfase_dom"/>
</dbReference>
<dbReference type="InterPro" id="IPR029057">
    <property type="entry name" value="PRTase-like"/>
</dbReference>
<dbReference type="NCBIfam" id="TIGR01203">
    <property type="entry name" value="HGPRTase"/>
    <property type="match status" value="1"/>
</dbReference>
<dbReference type="PANTHER" id="PTHR43340:SF1">
    <property type="entry name" value="HYPOXANTHINE PHOSPHORIBOSYLTRANSFERASE"/>
    <property type="match status" value="1"/>
</dbReference>
<dbReference type="PANTHER" id="PTHR43340">
    <property type="entry name" value="HYPOXANTHINE-GUANINE PHOSPHORIBOSYLTRANSFERASE"/>
    <property type="match status" value="1"/>
</dbReference>
<dbReference type="Pfam" id="PF00156">
    <property type="entry name" value="Pribosyltran"/>
    <property type="match status" value="1"/>
</dbReference>
<dbReference type="SUPFAM" id="SSF53271">
    <property type="entry name" value="PRTase-like"/>
    <property type="match status" value="1"/>
</dbReference>
<dbReference type="PROSITE" id="PS00103">
    <property type="entry name" value="PUR_PYR_PR_TRANSFER"/>
    <property type="match status" value="1"/>
</dbReference>
<reference key="1">
    <citation type="journal article" date="1995" name="Mol. Biochem. Parasitol.">
        <title>Cloning and expression of the hypoxanthine-guanine phosphoribosyltransferase from Leishmania donovani.</title>
        <authorList>
            <person name="Allen T.E."/>
            <person name="Hwang H.Y."/>
            <person name="Jardim A."/>
            <person name="Olafson R."/>
            <person name="Ullman B."/>
        </authorList>
    </citation>
    <scope>NUCLEOTIDE SEQUENCE [GENOMIC DNA]</scope>
    <source>
        <strain>MHOM/SD/62/1S</strain>
    </source>
</reference>
<accession>P43152</accession>
<protein>
    <recommendedName>
        <fullName>Hypoxanthine-guanine phosphoribosyltransferase</fullName>
        <shortName>HGPRT</shortName>
        <shortName>HGPRTase</shortName>
        <ecNumber>2.4.2.8</ecNumber>
    </recommendedName>
</protein>
<sequence length="211" mass="23612">MSNSAKSPSGPVGDEGRRNYPMSAHTLVTQEQVWAATAKCAKKIAEDYRSFKLTTDNPLYLLCVLKGSFIFTADLARFLADEGVPVKVEFICASSYGTGVETSGQVRMLLDVRDSVENRHILIVEDIVDSAITLQYLMRFMLAKKPASLKTVVLLDKPSGRKVEVLVDYPVITIPHAFVIGYGMDYAESYRELRDICVLKKEYYEKPESKV</sequence>
<proteinExistence type="inferred from homology"/>
<keyword id="KW-0963">Cytoplasm</keyword>
<keyword id="KW-0328">Glycosyltransferase</keyword>
<keyword id="KW-0460">Magnesium</keyword>
<keyword id="KW-0479">Metal-binding</keyword>
<keyword id="KW-0547">Nucleotide-binding</keyword>
<keyword id="KW-0660">Purine salvage</keyword>
<keyword id="KW-0808">Transferase</keyword>
<evidence type="ECO:0000250" key="1"/>
<evidence type="ECO:0000256" key="2">
    <source>
        <dbReference type="SAM" id="MobiDB-lite"/>
    </source>
</evidence>
<evidence type="ECO:0000305" key="3"/>
<name>HPRT_LEIDO</name>
<comment type="function">
    <text evidence="1">Converts guanine to guanosine monophosphate, and hypoxanthine to inosine monophosphate. Transfers the 5-phosphoribosyl group from 5-phosphoribosylpyrophosphate onto the purine. Plays a central role in the generation of purine nucleotides through the purine salvage pathway (By similarity).</text>
</comment>
<comment type="catalytic activity">
    <reaction>
        <text>IMP + diphosphate = hypoxanthine + 5-phospho-alpha-D-ribose 1-diphosphate</text>
        <dbReference type="Rhea" id="RHEA:17973"/>
        <dbReference type="ChEBI" id="CHEBI:17368"/>
        <dbReference type="ChEBI" id="CHEBI:33019"/>
        <dbReference type="ChEBI" id="CHEBI:58017"/>
        <dbReference type="ChEBI" id="CHEBI:58053"/>
        <dbReference type="EC" id="2.4.2.8"/>
    </reaction>
</comment>
<comment type="catalytic activity">
    <reaction>
        <text>GMP + diphosphate = guanine + 5-phospho-alpha-D-ribose 1-diphosphate</text>
        <dbReference type="Rhea" id="RHEA:25424"/>
        <dbReference type="ChEBI" id="CHEBI:16235"/>
        <dbReference type="ChEBI" id="CHEBI:33019"/>
        <dbReference type="ChEBI" id="CHEBI:58017"/>
        <dbReference type="ChEBI" id="CHEBI:58115"/>
        <dbReference type="EC" id="2.4.2.8"/>
    </reaction>
</comment>
<comment type="cofactor">
    <cofactor evidence="1">
        <name>Mg(2+)</name>
        <dbReference type="ChEBI" id="CHEBI:18420"/>
    </cofactor>
    <text evidence="1">Binds 2 magnesium ions per subunit. The magnesium ions are essentially bound to the substrate and have few direct interactions with the protein.</text>
</comment>
<comment type="pathway">
    <text>Purine metabolism; IMP biosynthesis via salvage pathway; IMP from hypoxanthine: step 1/1.</text>
</comment>
<comment type="subcellular location">
    <subcellularLocation>
        <location>Cytoplasm</location>
    </subcellularLocation>
</comment>
<comment type="similarity">
    <text evidence="3">Belongs to the purine/pyrimidine phosphoribosyltransferase family.</text>
</comment>
<organism>
    <name type="scientific">Leishmania donovani</name>
    <dbReference type="NCBI Taxonomy" id="5661"/>
    <lineage>
        <taxon>Eukaryota</taxon>
        <taxon>Discoba</taxon>
        <taxon>Euglenozoa</taxon>
        <taxon>Kinetoplastea</taxon>
        <taxon>Metakinetoplastina</taxon>
        <taxon>Trypanosomatida</taxon>
        <taxon>Trypanosomatidae</taxon>
        <taxon>Leishmaniinae</taxon>
        <taxon>Leishmania</taxon>
    </lineage>
</organism>